<dbReference type="EC" id="3.1.-.-" evidence="1"/>
<dbReference type="EMBL" id="CP001598">
    <property type="protein sequence ID" value="ACQ47481.1"/>
    <property type="molecule type" value="Genomic_DNA"/>
</dbReference>
<dbReference type="RefSeq" id="WP_000054692.1">
    <property type="nucleotide sequence ID" value="NC_012659.1"/>
</dbReference>
<dbReference type="SMR" id="C3P8K9"/>
<dbReference type="GeneID" id="93006797"/>
<dbReference type="KEGG" id="bai:BAA_4547"/>
<dbReference type="HOGENOM" id="CLU_106710_3_0_9"/>
<dbReference type="GO" id="GO:0005737">
    <property type="term" value="C:cytoplasm"/>
    <property type="evidence" value="ECO:0007669"/>
    <property type="project" value="UniProtKB-SubCell"/>
</dbReference>
<dbReference type="GO" id="GO:0004222">
    <property type="term" value="F:metalloendopeptidase activity"/>
    <property type="evidence" value="ECO:0007669"/>
    <property type="project" value="InterPro"/>
</dbReference>
<dbReference type="GO" id="GO:0004521">
    <property type="term" value="F:RNA endonuclease activity"/>
    <property type="evidence" value="ECO:0007669"/>
    <property type="project" value="UniProtKB-UniRule"/>
</dbReference>
<dbReference type="GO" id="GO:0008270">
    <property type="term" value="F:zinc ion binding"/>
    <property type="evidence" value="ECO:0007669"/>
    <property type="project" value="UniProtKB-UniRule"/>
</dbReference>
<dbReference type="GO" id="GO:0006364">
    <property type="term" value="P:rRNA processing"/>
    <property type="evidence" value="ECO:0007669"/>
    <property type="project" value="UniProtKB-UniRule"/>
</dbReference>
<dbReference type="Gene3D" id="3.40.390.30">
    <property type="entry name" value="Metalloproteases ('zincins'), catalytic domain"/>
    <property type="match status" value="1"/>
</dbReference>
<dbReference type="HAMAP" id="MF_00009">
    <property type="entry name" value="Endoribonucl_YbeY"/>
    <property type="match status" value="1"/>
</dbReference>
<dbReference type="InterPro" id="IPR023091">
    <property type="entry name" value="MetalPrtase_cat_dom_sf_prd"/>
</dbReference>
<dbReference type="InterPro" id="IPR002036">
    <property type="entry name" value="YbeY"/>
</dbReference>
<dbReference type="InterPro" id="IPR020549">
    <property type="entry name" value="YbeY_CS"/>
</dbReference>
<dbReference type="NCBIfam" id="TIGR00043">
    <property type="entry name" value="rRNA maturation RNase YbeY"/>
    <property type="match status" value="1"/>
</dbReference>
<dbReference type="PANTHER" id="PTHR46986">
    <property type="entry name" value="ENDORIBONUCLEASE YBEY, CHLOROPLASTIC"/>
    <property type="match status" value="1"/>
</dbReference>
<dbReference type="PANTHER" id="PTHR46986:SF1">
    <property type="entry name" value="ENDORIBONUCLEASE YBEY, CHLOROPLASTIC"/>
    <property type="match status" value="1"/>
</dbReference>
<dbReference type="Pfam" id="PF02130">
    <property type="entry name" value="YbeY"/>
    <property type="match status" value="1"/>
</dbReference>
<dbReference type="SUPFAM" id="SSF55486">
    <property type="entry name" value="Metalloproteases ('zincins'), catalytic domain"/>
    <property type="match status" value="1"/>
</dbReference>
<dbReference type="PROSITE" id="PS01306">
    <property type="entry name" value="UPF0054"/>
    <property type="match status" value="1"/>
</dbReference>
<protein>
    <recommendedName>
        <fullName evidence="1">Endoribonuclease YbeY</fullName>
        <ecNumber evidence="1">3.1.-.-</ecNumber>
    </recommendedName>
</protein>
<reference key="1">
    <citation type="submission" date="2009-04" db="EMBL/GenBank/DDBJ databases">
        <title>Genome sequence of Bacillus anthracis A0248.</title>
        <authorList>
            <person name="Dodson R.J."/>
            <person name="Munk A.C."/>
            <person name="Bruce D."/>
            <person name="Detter C."/>
            <person name="Tapia R."/>
            <person name="Sutton G."/>
            <person name="Sims D."/>
            <person name="Brettin T."/>
        </authorList>
    </citation>
    <scope>NUCLEOTIDE SEQUENCE [LARGE SCALE GENOMIC DNA]</scope>
    <source>
        <strain>A0248</strain>
    </source>
</reference>
<organism>
    <name type="scientific">Bacillus anthracis (strain A0248)</name>
    <dbReference type="NCBI Taxonomy" id="592021"/>
    <lineage>
        <taxon>Bacteria</taxon>
        <taxon>Bacillati</taxon>
        <taxon>Bacillota</taxon>
        <taxon>Bacilli</taxon>
        <taxon>Bacillales</taxon>
        <taxon>Bacillaceae</taxon>
        <taxon>Bacillus</taxon>
        <taxon>Bacillus cereus group</taxon>
    </lineage>
</organism>
<proteinExistence type="inferred from homology"/>
<sequence length="156" mass="18062">MSLLIDFIDETEEVKEEYVNLIREILGKAAQMEKIEDGAELSVTFVDNERIREINRDYRDKDQPTDVISFAMEEMGEGEMEIVGVEMPRMLGDLIISIPRAKEQAEEYGHSFDRELGFLALHGFLHLLGYDHMTEEDEKEMFGRQKEILEAFGLGR</sequence>
<name>YBEY_BACAA</name>
<keyword id="KW-0963">Cytoplasm</keyword>
<keyword id="KW-0255">Endonuclease</keyword>
<keyword id="KW-0378">Hydrolase</keyword>
<keyword id="KW-0479">Metal-binding</keyword>
<keyword id="KW-0540">Nuclease</keyword>
<keyword id="KW-0690">Ribosome biogenesis</keyword>
<keyword id="KW-0698">rRNA processing</keyword>
<keyword id="KW-0862">Zinc</keyword>
<evidence type="ECO:0000255" key="1">
    <source>
        <dbReference type="HAMAP-Rule" id="MF_00009"/>
    </source>
</evidence>
<feature type="chain" id="PRO_1000199946" description="Endoribonuclease YbeY">
    <location>
        <begin position="1"/>
        <end position="156"/>
    </location>
</feature>
<feature type="binding site" evidence="1">
    <location>
        <position position="122"/>
    </location>
    <ligand>
        <name>Zn(2+)</name>
        <dbReference type="ChEBI" id="CHEBI:29105"/>
        <note>catalytic</note>
    </ligand>
</feature>
<feature type="binding site" evidence="1">
    <location>
        <position position="126"/>
    </location>
    <ligand>
        <name>Zn(2+)</name>
        <dbReference type="ChEBI" id="CHEBI:29105"/>
        <note>catalytic</note>
    </ligand>
</feature>
<feature type="binding site" evidence="1">
    <location>
        <position position="132"/>
    </location>
    <ligand>
        <name>Zn(2+)</name>
        <dbReference type="ChEBI" id="CHEBI:29105"/>
        <note>catalytic</note>
    </ligand>
</feature>
<gene>
    <name evidence="1" type="primary">ybeY</name>
    <name type="ordered locus">BAA_4547</name>
</gene>
<comment type="function">
    <text evidence="1">Single strand-specific metallo-endoribonuclease involved in late-stage 70S ribosome quality control and in maturation of the 3' terminus of the 16S rRNA.</text>
</comment>
<comment type="cofactor">
    <cofactor evidence="1">
        <name>Zn(2+)</name>
        <dbReference type="ChEBI" id="CHEBI:29105"/>
    </cofactor>
    <text evidence="1">Binds 1 zinc ion.</text>
</comment>
<comment type="subcellular location">
    <subcellularLocation>
        <location evidence="1">Cytoplasm</location>
    </subcellularLocation>
</comment>
<comment type="similarity">
    <text evidence="1">Belongs to the endoribonuclease YbeY family.</text>
</comment>
<accession>C3P8K9</accession>